<name>XYLA_BRUA4</name>
<protein>
    <recommendedName>
        <fullName evidence="1">Xylose isomerase</fullName>
        <ecNumber evidence="1">5.3.1.5</ecNumber>
    </recommendedName>
</protein>
<gene>
    <name evidence="1" type="primary">xylA</name>
    <name type="ordered locus">Oant_3411</name>
</gene>
<feature type="chain" id="PRO_1000026447" description="Xylose isomerase">
    <location>
        <begin position="1"/>
        <end position="435"/>
    </location>
</feature>
<feature type="active site" evidence="1">
    <location>
        <position position="100"/>
    </location>
</feature>
<feature type="active site" evidence="1">
    <location>
        <position position="103"/>
    </location>
</feature>
<feature type="binding site" evidence="1">
    <location>
        <position position="231"/>
    </location>
    <ligand>
        <name>Mg(2+)</name>
        <dbReference type="ChEBI" id="CHEBI:18420"/>
        <label>1</label>
    </ligand>
</feature>
<feature type="binding site" evidence="1">
    <location>
        <position position="267"/>
    </location>
    <ligand>
        <name>Mg(2+)</name>
        <dbReference type="ChEBI" id="CHEBI:18420"/>
        <label>1</label>
    </ligand>
</feature>
<feature type="binding site" evidence="1">
    <location>
        <position position="267"/>
    </location>
    <ligand>
        <name>Mg(2+)</name>
        <dbReference type="ChEBI" id="CHEBI:18420"/>
        <label>2</label>
    </ligand>
</feature>
<feature type="binding site" evidence="1">
    <location>
        <position position="270"/>
    </location>
    <ligand>
        <name>Mg(2+)</name>
        <dbReference type="ChEBI" id="CHEBI:18420"/>
        <label>2</label>
    </ligand>
</feature>
<feature type="binding site" evidence="1">
    <location>
        <position position="295"/>
    </location>
    <ligand>
        <name>Mg(2+)</name>
        <dbReference type="ChEBI" id="CHEBI:18420"/>
        <label>1</label>
    </ligand>
</feature>
<feature type="binding site" evidence="1">
    <location>
        <position position="306"/>
    </location>
    <ligand>
        <name>Mg(2+)</name>
        <dbReference type="ChEBI" id="CHEBI:18420"/>
        <label>2</label>
    </ligand>
</feature>
<feature type="binding site" evidence="1">
    <location>
        <position position="308"/>
    </location>
    <ligand>
        <name>Mg(2+)</name>
        <dbReference type="ChEBI" id="CHEBI:18420"/>
        <label>2</label>
    </ligand>
</feature>
<feature type="binding site" evidence="1">
    <location>
        <position position="338"/>
    </location>
    <ligand>
        <name>Mg(2+)</name>
        <dbReference type="ChEBI" id="CHEBI:18420"/>
        <label>1</label>
    </ligand>
</feature>
<comment type="catalytic activity">
    <reaction evidence="1">
        <text>alpha-D-xylose = alpha-D-xylulofuranose</text>
        <dbReference type="Rhea" id="RHEA:22816"/>
        <dbReference type="ChEBI" id="CHEBI:28518"/>
        <dbReference type="ChEBI" id="CHEBI:188998"/>
        <dbReference type="EC" id="5.3.1.5"/>
    </reaction>
</comment>
<comment type="cofactor">
    <cofactor evidence="1">
        <name>Mg(2+)</name>
        <dbReference type="ChEBI" id="CHEBI:18420"/>
    </cofactor>
    <text evidence="1">Binds 2 magnesium ions per subunit.</text>
</comment>
<comment type="subunit">
    <text evidence="1">Homotetramer.</text>
</comment>
<comment type="subcellular location">
    <subcellularLocation>
        <location evidence="1">Cytoplasm</location>
    </subcellularLocation>
</comment>
<comment type="similarity">
    <text evidence="1">Belongs to the xylose isomerase family.</text>
</comment>
<dbReference type="EC" id="5.3.1.5" evidence="1"/>
<dbReference type="EMBL" id="CP000759">
    <property type="protein sequence ID" value="ABS16117.1"/>
    <property type="molecule type" value="Genomic_DNA"/>
</dbReference>
<dbReference type="RefSeq" id="WP_012092838.1">
    <property type="nucleotide sequence ID" value="NC_009668.1"/>
</dbReference>
<dbReference type="SMR" id="A6X4G3"/>
<dbReference type="STRING" id="439375.Oant_3411"/>
<dbReference type="KEGG" id="oan:Oant_3411"/>
<dbReference type="PATRIC" id="fig|439375.7.peg.3569"/>
<dbReference type="eggNOG" id="COG2115">
    <property type="taxonomic scope" value="Bacteria"/>
</dbReference>
<dbReference type="HOGENOM" id="CLU_037261_1_0_5"/>
<dbReference type="PhylomeDB" id="A6X4G3"/>
<dbReference type="Proteomes" id="UP000002301">
    <property type="component" value="Chromosome 2"/>
</dbReference>
<dbReference type="GO" id="GO:0005737">
    <property type="term" value="C:cytoplasm"/>
    <property type="evidence" value="ECO:0007669"/>
    <property type="project" value="UniProtKB-SubCell"/>
</dbReference>
<dbReference type="GO" id="GO:0000287">
    <property type="term" value="F:magnesium ion binding"/>
    <property type="evidence" value="ECO:0007669"/>
    <property type="project" value="UniProtKB-UniRule"/>
</dbReference>
<dbReference type="GO" id="GO:0009045">
    <property type="term" value="F:xylose isomerase activity"/>
    <property type="evidence" value="ECO:0007669"/>
    <property type="project" value="UniProtKB-UniRule"/>
</dbReference>
<dbReference type="GO" id="GO:0042732">
    <property type="term" value="P:D-xylose metabolic process"/>
    <property type="evidence" value="ECO:0007669"/>
    <property type="project" value="UniProtKB-UniRule"/>
</dbReference>
<dbReference type="FunFam" id="3.20.20.150:FF:000002">
    <property type="entry name" value="Xylose isomerase"/>
    <property type="match status" value="1"/>
</dbReference>
<dbReference type="Gene3D" id="3.20.20.150">
    <property type="entry name" value="Divalent-metal-dependent TIM barrel enzymes"/>
    <property type="match status" value="1"/>
</dbReference>
<dbReference type="HAMAP" id="MF_00455">
    <property type="entry name" value="Xylose_isom_A"/>
    <property type="match status" value="1"/>
</dbReference>
<dbReference type="InterPro" id="IPR036237">
    <property type="entry name" value="Xyl_isomerase-like_sf"/>
</dbReference>
<dbReference type="InterPro" id="IPR013022">
    <property type="entry name" value="Xyl_isomerase-like_TIM-brl"/>
</dbReference>
<dbReference type="InterPro" id="IPR013452">
    <property type="entry name" value="Xylose_isom_bac"/>
</dbReference>
<dbReference type="InterPro" id="IPR001998">
    <property type="entry name" value="Xylose_isomerase"/>
</dbReference>
<dbReference type="NCBIfam" id="NF003998">
    <property type="entry name" value="PRK05474.1"/>
    <property type="match status" value="1"/>
</dbReference>
<dbReference type="NCBIfam" id="TIGR02630">
    <property type="entry name" value="xylose_isom_A"/>
    <property type="match status" value="1"/>
</dbReference>
<dbReference type="PANTHER" id="PTHR48408">
    <property type="match status" value="1"/>
</dbReference>
<dbReference type="PANTHER" id="PTHR48408:SF1">
    <property type="entry name" value="XYLOSE ISOMERASE"/>
    <property type="match status" value="1"/>
</dbReference>
<dbReference type="Pfam" id="PF01261">
    <property type="entry name" value="AP_endonuc_2"/>
    <property type="match status" value="1"/>
</dbReference>
<dbReference type="PRINTS" id="PR00688">
    <property type="entry name" value="XYLOSISMRASE"/>
</dbReference>
<dbReference type="SUPFAM" id="SSF51658">
    <property type="entry name" value="Xylose isomerase-like"/>
    <property type="match status" value="1"/>
</dbReference>
<dbReference type="PROSITE" id="PS51415">
    <property type="entry name" value="XYLOSE_ISOMERASE"/>
    <property type="match status" value="1"/>
</dbReference>
<sequence>MSTGFFGDIQKVKYEGPDSDSPLAFRHYNPDEIVLGKRMEDHLRFAVAYWHSFAWEGGDPFGGRTFDRPWYSNELDAAKLKADVAFEFFSLLGAPYYCFHDADVRPEGRNFAENTRYLNEIVDIFEKKQAETGVKLLWGTANLFSNRRYMGGAATNPDPDVFAFAAATVKSCIDATKRLGGENYVLWGGREGYETLLNTDLGRELDQMGRFLNLVVEYKHKIGFKGTILIEPKPQEPTKHQYDYDVATVYGFLKRYGLESEVKVNIEQGHAILAGHSFEHELALARALGIFGSIDMNRNDYQSGWDTDQFPNNVPEMALAYYQVLLAGGFTTGGTNFDAKLRRQSLDPQDLLIGHIGGMDCCARGLKAAAAMLEDGALSKPLDERYAGWNGDFGKKLLTGLSLDQITAEVETKDINPQPKSGRQEYLENVVNRYV</sequence>
<keyword id="KW-0119">Carbohydrate metabolism</keyword>
<keyword id="KW-0963">Cytoplasm</keyword>
<keyword id="KW-0413">Isomerase</keyword>
<keyword id="KW-0460">Magnesium</keyword>
<keyword id="KW-0479">Metal-binding</keyword>
<keyword id="KW-1185">Reference proteome</keyword>
<keyword id="KW-0859">Xylose metabolism</keyword>
<accession>A6X4G3</accession>
<organism>
    <name type="scientific">Brucella anthropi (strain ATCC 49188 / DSM 6882 / CCUG 24695 / JCM 21032 / LMG 3331 / NBRC 15819 / NCTC 12168 / Alc 37)</name>
    <name type="common">Ochrobactrum anthropi</name>
    <dbReference type="NCBI Taxonomy" id="439375"/>
    <lineage>
        <taxon>Bacteria</taxon>
        <taxon>Pseudomonadati</taxon>
        <taxon>Pseudomonadota</taxon>
        <taxon>Alphaproteobacteria</taxon>
        <taxon>Hyphomicrobiales</taxon>
        <taxon>Brucellaceae</taxon>
        <taxon>Brucella/Ochrobactrum group</taxon>
        <taxon>Brucella</taxon>
    </lineage>
</organism>
<evidence type="ECO:0000255" key="1">
    <source>
        <dbReference type="HAMAP-Rule" id="MF_00455"/>
    </source>
</evidence>
<proteinExistence type="inferred from homology"/>
<reference key="1">
    <citation type="journal article" date="2011" name="J. Bacteriol.">
        <title>Genome of Ochrobactrum anthropi ATCC 49188 T, a versatile opportunistic pathogen and symbiont of several eukaryotic hosts.</title>
        <authorList>
            <person name="Chain P.S."/>
            <person name="Lang D.M."/>
            <person name="Comerci D.J."/>
            <person name="Malfatti S.A."/>
            <person name="Vergez L.M."/>
            <person name="Shin M."/>
            <person name="Ugalde R.A."/>
            <person name="Garcia E."/>
            <person name="Tolmasky M.E."/>
        </authorList>
    </citation>
    <scope>NUCLEOTIDE SEQUENCE [LARGE SCALE GENOMIC DNA]</scope>
    <source>
        <strain>ATCC 49188 / DSM 6882 / CCUG 24695 / JCM 21032 / LMG 3331 / NBRC 15819 / NCTC 12168 / Alc 37</strain>
    </source>
</reference>